<gene>
    <name type="primary">ylaB</name>
    <name type="ordered locus">BSU14720</name>
</gene>
<accession>O07626</accession>
<reference key="1">
    <citation type="submission" date="1997-06" db="EMBL/GenBank/DDBJ databases">
        <authorList>
            <person name="Purnell B."/>
            <person name="Presecan E."/>
            <person name="Glaser P."/>
            <person name="Richou A."/>
            <person name="Danchin A."/>
            <person name="Goffeau A."/>
        </authorList>
    </citation>
    <scope>NUCLEOTIDE SEQUENCE [GENOMIC DNA]</scope>
    <source>
        <strain>168</strain>
    </source>
</reference>
<reference key="2">
    <citation type="journal article" date="1997" name="Nature">
        <title>The complete genome sequence of the Gram-positive bacterium Bacillus subtilis.</title>
        <authorList>
            <person name="Kunst F."/>
            <person name="Ogasawara N."/>
            <person name="Moszer I."/>
            <person name="Albertini A.M."/>
            <person name="Alloni G."/>
            <person name="Azevedo V."/>
            <person name="Bertero M.G."/>
            <person name="Bessieres P."/>
            <person name="Bolotin A."/>
            <person name="Borchert S."/>
            <person name="Borriss R."/>
            <person name="Boursier L."/>
            <person name="Brans A."/>
            <person name="Braun M."/>
            <person name="Brignell S.C."/>
            <person name="Bron S."/>
            <person name="Brouillet S."/>
            <person name="Bruschi C.V."/>
            <person name="Caldwell B."/>
            <person name="Capuano V."/>
            <person name="Carter N.M."/>
            <person name="Choi S.-K."/>
            <person name="Codani J.-J."/>
            <person name="Connerton I.F."/>
            <person name="Cummings N.J."/>
            <person name="Daniel R.A."/>
            <person name="Denizot F."/>
            <person name="Devine K.M."/>
            <person name="Duesterhoeft A."/>
            <person name="Ehrlich S.D."/>
            <person name="Emmerson P.T."/>
            <person name="Entian K.-D."/>
            <person name="Errington J."/>
            <person name="Fabret C."/>
            <person name="Ferrari E."/>
            <person name="Foulger D."/>
            <person name="Fritz C."/>
            <person name="Fujita M."/>
            <person name="Fujita Y."/>
            <person name="Fuma S."/>
            <person name="Galizzi A."/>
            <person name="Galleron N."/>
            <person name="Ghim S.-Y."/>
            <person name="Glaser P."/>
            <person name="Goffeau A."/>
            <person name="Golightly E.J."/>
            <person name="Grandi G."/>
            <person name="Guiseppi G."/>
            <person name="Guy B.J."/>
            <person name="Haga K."/>
            <person name="Haiech J."/>
            <person name="Harwood C.R."/>
            <person name="Henaut A."/>
            <person name="Hilbert H."/>
            <person name="Holsappel S."/>
            <person name="Hosono S."/>
            <person name="Hullo M.-F."/>
            <person name="Itaya M."/>
            <person name="Jones L.-M."/>
            <person name="Joris B."/>
            <person name="Karamata D."/>
            <person name="Kasahara Y."/>
            <person name="Klaerr-Blanchard M."/>
            <person name="Klein C."/>
            <person name="Kobayashi Y."/>
            <person name="Koetter P."/>
            <person name="Koningstein G."/>
            <person name="Krogh S."/>
            <person name="Kumano M."/>
            <person name="Kurita K."/>
            <person name="Lapidus A."/>
            <person name="Lardinois S."/>
            <person name="Lauber J."/>
            <person name="Lazarevic V."/>
            <person name="Lee S.-M."/>
            <person name="Levine A."/>
            <person name="Liu H."/>
            <person name="Masuda S."/>
            <person name="Mauel C."/>
            <person name="Medigue C."/>
            <person name="Medina N."/>
            <person name="Mellado R.P."/>
            <person name="Mizuno M."/>
            <person name="Moestl D."/>
            <person name="Nakai S."/>
            <person name="Noback M."/>
            <person name="Noone D."/>
            <person name="O'Reilly M."/>
            <person name="Ogawa K."/>
            <person name="Ogiwara A."/>
            <person name="Oudega B."/>
            <person name="Park S.-H."/>
            <person name="Parro V."/>
            <person name="Pohl T.M."/>
            <person name="Portetelle D."/>
            <person name="Porwollik S."/>
            <person name="Prescott A.M."/>
            <person name="Presecan E."/>
            <person name="Pujic P."/>
            <person name="Purnelle B."/>
            <person name="Rapoport G."/>
            <person name="Rey M."/>
            <person name="Reynolds S."/>
            <person name="Rieger M."/>
            <person name="Rivolta C."/>
            <person name="Rocha E."/>
            <person name="Roche B."/>
            <person name="Rose M."/>
            <person name="Sadaie Y."/>
            <person name="Sato T."/>
            <person name="Scanlan E."/>
            <person name="Schleich S."/>
            <person name="Schroeter R."/>
            <person name="Scoffone F."/>
            <person name="Sekiguchi J."/>
            <person name="Sekowska A."/>
            <person name="Seror S.J."/>
            <person name="Serror P."/>
            <person name="Shin B.-S."/>
            <person name="Soldo B."/>
            <person name="Sorokin A."/>
            <person name="Tacconi E."/>
            <person name="Takagi T."/>
            <person name="Takahashi H."/>
            <person name="Takemaru K."/>
            <person name="Takeuchi M."/>
            <person name="Tamakoshi A."/>
            <person name="Tanaka T."/>
            <person name="Terpstra P."/>
            <person name="Tognoni A."/>
            <person name="Tosato V."/>
            <person name="Uchiyama S."/>
            <person name="Vandenbol M."/>
            <person name="Vannier F."/>
            <person name="Vassarotti A."/>
            <person name="Viari A."/>
            <person name="Wambutt R."/>
            <person name="Wedler E."/>
            <person name="Wedler H."/>
            <person name="Weitzenegger T."/>
            <person name="Winters P."/>
            <person name="Wipat A."/>
            <person name="Yamamoto H."/>
            <person name="Yamane K."/>
            <person name="Yasumoto K."/>
            <person name="Yata K."/>
            <person name="Yoshida K."/>
            <person name="Yoshikawa H.-F."/>
            <person name="Zumstein E."/>
            <person name="Yoshikawa H."/>
            <person name="Danchin A."/>
        </authorList>
    </citation>
    <scope>NUCLEOTIDE SEQUENCE [LARGE SCALE GENOMIC DNA]</scope>
    <source>
        <strain>168</strain>
    </source>
</reference>
<organism>
    <name type="scientific">Bacillus subtilis (strain 168)</name>
    <dbReference type="NCBI Taxonomy" id="224308"/>
    <lineage>
        <taxon>Bacteria</taxon>
        <taxon>Bacillati</taxon>
        <taxon>Bacillota</taxon>
        <taxon>Bacilli</taxon>
        <taxon>Bacillales</taxon>
        <taxon>Bacillaceae</taxon>
        <taxon>Bacillus</taxon>
    </lineage>
</organism>
<name>YLAB_BACSU</name>
<proteinExistence type="predicted"/>
<dbReference type="EMBL" id="Z97025">
    <property type="protein sequence ID" value="CAB09707.1"/>
    <property type="molecule type" value="Genomic_DNA"/>
</dbReference>
<dbReference type="EMBL" id="AL009126">
    <property type="protein sequence ID" value="CAB13345.1"/>
    <property type="molecule type" value="Genomic_DNA"/>
</dbReference>
<dbReference type="PIR" id="H69871">
    <property type="entry name" value="H69871"/>
</dbReference>
<dbReference type="RefSeq" id="NP_389355.1">
    <property type="nucleotide sequence ID" value="NC_000964.3"/>
</dbReference>
<dbReference type="RefSeq" id="WP_003232287.1">
    <property type="nucleotide sequence ID" value="NZ_OZ025638.1"/>
</dbReference>
<dbReference type="SMR" id="O07626"/>
<dbReference type="FunCoup" id="O07626">
    <property type="interactions" value="183"/>
</dbReference>
<dbReference type="STRING" id="224308.BSU14720"/>
<dbReference type="PaxDb" id="224308-BSU14720"/>
<dbReference type="EnsemblBacteria" id="CAB13345">
    <property type="protein sequence ID" value="CAB13345"/>
    <property type="gene ID" value="BSU_14720"/>
</dbReference>
<dbReference type="GeneID" id="935962"/>
<dbReference type="KEGG" id="bsu:BSU14720"/>
<dbReference type="PATRIC" id="fig|224308.179.peg.1606"/>
<dbReference type="eggNOG" id="ENOG5030D4A">
    <property type="taxonomic scope" value="Bacteria"/>
</dbReference>
<dbReference type="InParanoid" id="O07626"/>
<dbReference type="OrthoDB" id="2894770at2"/>
<dbReference type="BioCyc" id="BSUB:BSU14720-MONOMER"/>
<dbReference type="Proteomes" id="UP000001570">
    <property type="component" value="Chromosome"/>
</dbReference>
<dbReference type="GO" id="GO:0016020">
    <property type="term" value="C:membrane"/>
    <property type="evidence" value="ECO:0007669"/>
    <property type="project" value="UniProtKB-SubCell"/>
</dbReference>
<keyword id="KW-0472">Membrane</keyword>
<keyword id="KW-1185">Reference proteome</keyword>
<keyword id="KW-0812">Transmembrane</keyword>
<keyword id="KW-1133">Transmembrane helix</keyword>
<feature type="chain" id="PRO_0000049620" description="Uncharacterized protein YlaB">
    <location>
        <begin position="1"/>
        <end position="89"/>
    </location>
</feature>
<feature type="transmembrane region" description="Helical" evidence="1">
    <location>
        <begin position="67"/>
        <end position="86"/>
    </location>
</feature>
<comment type="subcellular location">
    <subcellularLocation>
        <location evidence="2">Membrane</location>
        <topology evidence="2">Single-pass membrane protein</topology>
    </subcellularLocation>
</comment>
<evidence type="ECO:0000255" key="1"/>
<evidence type="ECO:0000305" key="2"/>
<protein>
    <recommendedName>
        <fullName>Uncharacterized protein YlaB</fullName>
    </recommendedName>
</protein>
<sequence length="89" mass="10838">MNHKEKESVFVDLYDLYKEGELEDESMEWMKQHESLFQKNAEDLKSKTCLKRSPGAEEESQIRYMKVYLSSMYICFILLAIWMTVWFYF</sequence>